<evidence type="ECO:0000255" key="1"/>
<evidence type="ECO:0000269" key="2">
    <source>
    </source>
</evidence>
<evidence type="ECO:0000305" key="3"/>
<gene>
    <name type="primary">ghxQ</name>
    <name type="synonym">ygfQ</name>
    <name type="synonym">ygfR</name>
    <name type="ordered locus">b4464</name>
    <name type="ordered locus">JW5467</name>
</gene>
<keyword id="KW-1003">Cell membrane</keyword>
<keyword id="KW-0472">Membrane</keyword>
<keyword id="KW-1185">Reference proteome</keyword>
<keyword id="KW-0812">Transmembrane</keyword>
<keyword id="KW-1133">Transmembrane helix</keyword>
<keyword id="KW-0813">Transport</keyword>
<comment type="function">
    <text evidence="2">High-affinity transporter for guanine and hypoxanthine.</text>
</comment>
<comment type="biophysicochemical properties">
    <kinetics>
        <KM evidence="2">1.8 uM for guanine</KM>
        <KM evidence="2">23.2 uM for hypoxanthine</KM>
        <Vmax evidence="2">3.4 nmol/min/mg enzyme with guanine as substrate</Vmax>
        <Vmax evidence="2">13.8 nmol/min/mg enzyme with hypoxanthine as substrate</Vmax>
    </kinetics>
</comment>
<comment type="subcellular location">
    <subcellularLocation>
        <location evidence="2">Cell membrane</location>
        <topology evidence="2">Multi-pass membrane protein</topology>
    </subcellularLocation>
</comment>
<comment type="similarity">
    <text evidence="3">Belongs to the nucleobase:cation symporter-2 (NCS2) (TC 2.A.40) family. Azg-like subfamily.</text>
</comment>
<comment type="sequence caution" evidence="3">
    <conflict type="frameshift">
        <sequence resource="EMBL-CDS" id="AAA83065"/>
    </conflict>
    <text>Produces two separate ORFs (ygfQ and ygfR).</text>
</comment>
<comment type="sequence caution" evidence="3">
    <conflict type="frameshift">
        <sequence resource="EMBL-CDS" id="AAA83066"/>
    </conflict>
    <text>Produces two separate ORFs (ygfQ and ygfR).</text>
</comment>
<proteinExistence type="evidence at protein level"/>
<dbReference type="EMBL" id="U28375">
    <property type="protein sequence ID" value="AAA83065.1"/>
    <property type="status" value="ALT_FRAME"/>
    <property type="molecule type" value="Genomic_DNA"/>
</dbReference>
<dbReference type="EMBL" id="U28375">
    <property type="protein sequence ID" value="AAA83066.1"/>
    <property type="status" value="ALT_FRAME"/>
    <property type="molecule type" value="Genomic_DNA"/>
</dbReference>
<dbReference type="EMBL" id="U00096">
    <property type="protein sequence ID" value="AAT48153.1"/>
    <property type="molecule type" value="Genomic_DNA"/>
</dbReference>
<dbReference type="EMBL" id="AP009048">
    <property type="protein sequence ID" value="BAE76950.1"/>
    <property type="molecule type" value="Genomic_DNA"/>
</dbReference>
<dbReference type="PIR" id="D65072">
    <property type="entry name" value="D65072"/>
</dbReference>
<dbReference type="PIR" id="E65072">
    <property type="entry name" value="E65072"/>
</dbReference>
<dbReference type="RefSeq" id="WP_000012163.1">
    <property type="nucleotide sequence ID" value="NZ_STEB01000001.1"/>
</dbReference>
<dbReference type="RefSeq" id="YP_026186.1">
    <property type="nucleotide sequence ID" value="NC_000913.3"/>
</dbReference>
<dbReference type="SMR" id="Q46817"/>
<dbReference type="BioGRID" id="4259228">
    <property type="interactions" value="166"/>
</dbReference>
<dbReference type="FunCoup" id="Q46817">
    <property type="interactions" value="295"/>
</dbReference>
<dbReference type="STRING" id="511145.b4464"/>
<dbReference type="TCDB" id="2.A.40.7.7">
    <property type="family name" value="the nucleobase/ascorbate transporter (nat) or nucleobase:cation symporter-2 (ncs2) family"/>
</dbReference>
<dbReference type="jPOST" id="Q46817"/>
<dbReference type="PaxDb" id="511145-b4464"/>
<dbReference type="DNASU" id="2847748"/>
<dbReference type="EnsemblBacteria" id="AAT48153">
    <property type="protein sequence ID" value="AAT48153"/>
    <property type="gene ID" value="b4464"/>
</dbReference>
<dbReference type="GeneID" id="2847748"/>
<dbReference type="GeneID" id="75205279"/>
<dbReference type="KEGG" id="ecj:JW5467"/>
<dbReference type="KEGG" id="eco:b4464"/>
<dbReference type="KEGG" id="ecoc:C3026_15815"/>
<dbReference type="PATRIC" id="fig|1411691.4.peg.3850"/>
<dbReference type="EchoBASE" id="EB2879"/>
<dbReference type="eggNOG" id="COG2252">
    <property type="taxonomic scope" value="Bacteria"/>
</dbReference>
<dbReference type="HOGENOM" id="CLU_024508_0_1_6"/>
<dbReference type="InParanoid" id="Q46817"/>
<dbReference type="OMA" id="PDAMGMV"/>
<dbReference type="OrthoDB" id="9808458at2"/>
<dbReference type="PhylomeDB" id="Q46817"/>
<dbReference type="BioCyc" id="EcoCyc:G7504-MONOMER"/>
<dbReference type="BioCyc" id="MetaCyc:G7504-MONOMER"/>
<dbReference type="SABIO-RK" id="Q46817"/>
<dbReference type="PRO" id="PR:Q46817"/>
<dbReference type="Proteomes" id="UP000000625">
    <property type="component" value="Chromosome"/>
</dbReference>
<dbReference type="GO" id="GO:0016020">
    <property type="term" value="C:membrane"/>
    <property type="evidence" value="ECO:0000314"/>
    <property type="project" value="EcoCyc"/>
</dbReference>
<dbReference type="GO" id="GO:0005886">
    <property type="term" value="C:plasma membrane"/>
    <property type="evidence" value="ECO:0000314"/>
    <property type="project" value="EcoCyc"/>
</dbReference>
<dbReference type="GO" id="GO:0015208">
    <property type="term" value="F:guanine transmembrane transporter activity"/>
    <property type="evidence" value="ECO:0000314"/>
    <property type="project" value="EcoCyc"/>
</dbReference>
<dbReference type="GO" id="GO:0098710">
    <property type="term" value="P:guanine import across plasma membrane"/>
    <property type="evidence" value="ECO:0000314"/>
    <property type="project" value="EcoCyc"/>
</dbReference>
<dbReference type="GO" id="GO:0035344">
    <property type="term" value="P:hypoxanthine transport"/>
    <property type="evidence" value="ECO:0000314"/>
    <property type="project" value="EcoCyc"/>
</dbReference>
<dbReference type="InterPro" id="IPR045018">
    <property type="entry name" value="Azg-like"/>
</dbReference>
<dbReference type="InterPro" id="IPR006043">
    <property type="entry name" value="NCS2"/>
</dbReference>
<dbReference type="PANTHER" id="PTHR43337:SF4">
    <property type="entry name" value="GUANINE_HYPOXANTHINE PERMEASE GHXQ"/>
    <property type="match status" value="1"/>
</dbReference>
<dbReference type="PANTHER" id="PTHR43337">
    <property type="entry name" value="XANTHINE/URACIL PERMEASE C887.17-RELATED"/>
    <property type="match status" value="1"/>
</dbReference>
<dbReference type="Pfam" id="PF00860">
    <property type="entry name" value="Xan_ur_permease"/>
    <property type="match status" value="1"/>
</dbReference>
<feature type="chain" id="PRO_0000169358" description="Guanine/hypoxanthine permease GhxQ">
    <location>
        <begin position="1"/>
        <end position="455"/>
    </location>
</feature>
<feature type="topological domain" description="Cytoplasmic" evidence="1">
    <location>
        <begin position="1"/>
        <end position="31"/>
    </location>
</feature>
<feature type="transmembrane region" description="Helical" evidence="1">
    <location>
        <begin position="32"/>
        <end position="55"/>
    </location>
</feature>
<feature type="topological domain" description="Periplasmic" evidence="1">
    <location>
        <begin position="56"/>
        <end position="65"/>
    </location>
</feature>
<feature type="transmembrane region" description="Helical" evidence="1">
    <location>
        <begin position="66"/>
        <end position="84"/>
    </location>
</feature>
<feature type="topological domain" description="Cytoplasmic" evidence="1">
    <location>
        <begin position="85"/>
        <end position="86"/>
    </location>
</feature>
<feature type="transmembrane region" description="Discontinuously helical" evidence="1">
    <location>
        <begin position="87"/>
        <end position="103"/>
    </location>
</feature>
<feature type="topological domain" description="Periplasmic" evidence="1">
    <location>
        <begin position="104"/>
        <end position="115"/>
    </location>
</feature>
<feature type="transmembrane region" description="Helical" evidence="1">
    <location>
        <begin position="116"/>
        <end position="135"/>
    </location>
</feature>
<feature type="topological domain" description="Cytoplasmic" evidence="1">
    <location>
        <begin position="136"/>
        <end position="147"/>
    </location>
</feature>
<feature type="transmembrane region" description="Helical" evidence="1">
    <location>
        <begin position="148"/>
        <end position="168"/>
    </location>
</feature>
<feature type="topological domain" description="Periplasmic" evidence="1">
    <location>
        <begin position="169"/>
        <end position="186"/>
    </location>
</feature>
<feature type="transmembrane region" description="Helical" evidence="1">
    <location>
        <begin position="187"/>
        <end position="204"/>
    </location>
</feature>
<feature type="topological domain" description="Cytoplasmic" evidence="1">
    <location>
        <begin position="205"/>
        <end position="208"/>
    </location>
</feature>
<feature type="transmembrane region" description="Helical" evidence="1">
    <location>
        <begin position="209"/>
        <end position="228"/>
    </location>
</feature>
<feature type="topological domain" description="Periplasmic" evidence="1">
    <location>
        <begin position="229"/>
        <end position="260"/>
    </location>
</feature>
<feature type="transmembrane region" description="Helical" evidence="1">
    <location>
        <begin position="261"/>
        <end position="289"/>
    </location>
</feature>
<feature type="topological domain" description="Cytoplasmic" evidence="1">
    <location>
        <begin position="290"/>
        <end position="302"/>
    </location>
</feature>
<feature type="transmembrane region" description="Helical" evidence="1">
    <location>
        <begin position="303"/>
        <end position="318"/>
    </location>
</feature>
<feature type="topological domain" description="Periplasmic" evidence="1">
    <location>
        <begin position="319"/>
        <end position="320"/>
    </location>
</feature>
<feature type="transmembrane region" description="Discontinuously helical" evidence="1">
    <location>
        <begin position="321"/>
        <end position="336"/>
    </location>
</feature>
<feature type="topological domain" description="Cytoplasmic" evidence="1">
    <location>
        <begin position="337"/>
        <end position="340"/>
    </location>
</feature>
<feature type="transmembrane region" description="Helical" evidence="1">
    <location>
        <begin position="341"/>
        <end position="355"/>
    </location>
</feature>
<feature type="topological domain" description="Periplasmic" evidence="1">
    <location>
        <begin position="356"/>
        <end position="366"/>
    </location>
</feature>
<feature type="transmembrane region" description="Helical" evidence="1">
    <location>
        <begin position="367"/>
        <end position="386"/>
    </location>
</feature>
<feature type="topological domain" description="Cytoplasmic" evidence="1">
    <location>
        <begin position="387"/>
        <end position="391"/>
    </location>
</feature>
<feature type="intramembrane region" description="Discontinuously helical" evidence="1">
    <location>
        <begin position="392"/>
        <end position="427"/>
    </location>
</feature>
<feature type="topological domain" description="Cytoplasmic" evidence="1">
    <location>
        <begin position="428"/>
        <end position="455"/>
    </location>
</feature>
<sequence length="455" mass="46758">MSGDILQTPDAPKPQGALDNYFKITARGSTVRQEVLAGLTTFLAMVYSVIVVPGMLGKAGFPPAAVFVATCLVAGFGSLLMGLWANLPMAIGCAISLTAFTAFSLVLGQQISVPVALGAVFLMGVIFTAISVTGVRTWILRNLPMGIAHGTGIGIGLFLLLIAANGVGMVIKNPIEGLPVALGAFTSFPVMMSLLGLAVIFGLEKCRVPGGILLVIIAISIIGLIFDPAVKYHGLVAMPSLTGEDGKSLIFSLDIMGALQPTVLPSVLALVMTAVFDATGTIRAVAGQANLLDKDNQIINGGKALTSDSVSSIFSGLVGAAPAAVYIESAAGTAAGGKTGLTATVVGALFLLILFLSPLSFLIPGYATAPALMYVGLLMLSNVSKLDFNDFIDAMAGLVCAVFIVLTCNIVTGIMLGFVTLVVGRVFAREWQKLNIGTVIITAALVAFYAGGWAI</sequence>
<organism>
    <name type="scientific">Escherichia coli (strain K12)</name>
    <dbReference type="NCBI Taxonomy" id="83333"/>
    <lineage>
        <taxon>Bacteria</taxon>
        <taxon>Pseudomonadati</taxon>
        <taxon>Pseudomonadota</taxon>
        <taxon>Gammaproteobacteria</taxon>
        <taxon>Enterobacterales</taxon>
        <taxon>Enterobacteriaceae</taxon>
        <taxon>Escherichia</taxon>
    </lineage>
</organism>
<name>GHXQ_ECOLI</name>
<protein>
    <recommendedName>
        <fullName>Guanine/hypoxanthine permease GhxQ</fullName>
    </recommendedName>
</protein>
<accession>Q46817</accession>
<accession>Q2M9V6</accession>
<accession>Q46818</accession>
<accession>Q6BF61</accession>
<reference key="1">
    <citation type="journal article" date="1997" name="Science">
        <title>The complete genome sequence of Escherichia coli K-12.</title>
        <authorList>
            <person name="Blattner F.R."/>
            <person name="Plunkett G. III"/>
            <person name="Bloch C.A."/>
            <person name="Perna N.T."/>
            <person name="Burland V."/>
            <person name="Riley M."/>
            <person name="Collado-Vides J."/>
            <person name="Glasner J.D."/>
            <person name="Rode C.K."/>
            <person name="Mayhew G.F."/>
            <person name="Gregor J."/>
            <person name="Davis N.W."/>
            <person name="Kirkpatrick H.A."/>
            <person name="Goeden M.A."/>
            <person name="Rose D.J."/>
            <person name="Mau B."/>
            <person name="Shao Y."/>
        </authorList>
    </citation>
    <scope>NUCLEOTIDE SEQUENCE [LARGE SCALE GENOMIC DNA]</scope>
    <source>
        <strain>K12 / MG1655 / ATCC 47076</strain>
    </source>
</reference>
<reference key="2">
    <citation type="journal article" date="2006" name="Nucleic Acids Res.">
        <title>Escherichia coli K-12: a cooperatively developed annotation snapshot -- 2005.</title>
        <authorList>
            <person name="Riley M."/>
            <person name="Abe T."/>
            <person name="Arnaud M.B."/>
            <person name="Berlyn M.K.B."/>
            <person name="Blattner F.R."/>
            <person name="Chaudhuri R.R."/>
            <person name="Glasner J.D."/>
            <person name="Horiuchi T."/>
            <person name="Keseler I.M."/>
            <person name="Kosuge T."/>
            <person name="Mori H."/>
            <person name="Perna N.T."/>
            <person name="Plunkett G. III"/>
            <person name="Rudd K.E."/>
            <person name="Serres M.H."/>
            <person name="Thomas G.H."/>
            <person name="Thomson N.R."/>
            <person name="Wishart D."/>
            <person name="Wanner B.L."/>
        </authorList>
    </citation>
    <scope>SEQUENCE REVISION</scope>
</reference>
<reference key="3">
    <citation type="journal article" date="2006" name="Mol. Syst. Biol.">
        <title>Highly accurate genome sequences of Escherichia coli K-12 strains MG1655 and W3110.</title>
        <authorList>
            <person name="Hayashi K."/>
            <person name="Morooka N."/>
            <person name="Yamamoto Y."/>
            <person name="Fujita K."/>
            <person name="Isono K."/>
            <person name="Choi S."/>
            <person name="Ohtsubo E."/>
            <person name="Baba T."/>
            <person name="Wanner B.L."/>
            <person name="Mori H."/>
            <person name="Horiuchi T."/>
        </authorList>
    </citation>
    <scope>NUCLEOTIDE SEQUENCE [LARGE SCALE GENOMIC DNA]</scope>
    <source>
        <strain>K12 / W3110 / ATCC 27325 / DSM 5911</strain>
    </source>
</reference>
<reference key="4">
    <citation type="journal article" date="2013" name="J. Biol. Chem.">
        <title>Functional identification of the hypoxanthine/guanine transporters YjcD and YgfQ and the adenine transporters PurP and YicO of Escherichia coli K-12.</title>
        <authorList>
            <person name="Papakostas K."/>
            <person name="Botou M."/>
            <person name="Frillingos S."/>
        </authorList>
    </citation>
    <scope>FUNCTION</scope>
    <scope>BIOPHYSICOCHEMICAL PROPERTIES</scope>
    <scope>SUBCELLULAR LOCATION</scope>
    <scope>GENE NAME</scope>
    <source>
        <strain>K12</strain>
    </source>
</reference>